<keyword id="KW-0131">Cell cycle</keyword>
<keyword id="KW-0132">Cell division</keyword>
<keyword id="KW-0133">Cell shape</keyword>
<keyword id="KW-0961">Cell wall biogenesis/degradation</keyword>
<keyword id="KW-0963">Cytoplasm</keyword>
<keyword id="KW-0573">Peptidoglycan synthesis</keyword>
<keyword id="KW-0670">Pyruvate</keyword>
<keyword id="KW-0808">Transferase</keyword>
<protein>
    <recommendedName>
        <fullName evidence="1">UDP-N-acetylglucosamine 1-carboxyvinyltransferase</fullName>
        <ecNumber evidence="1">2.5.1.7</ecNumber>
    </recommendedName>
    <alternativeName>
        <fullName evidence="1">Enoylpyruvate transferase</fullName>
    </alternativeName>
    <alternativeName>
        <fullName evidence="1">UDP-N-acetylglucosamine enolpyruvyl transferase</fullName>
        <shortName evidence="1">EPT</shortName>
    </alternativeName>
</protein>
<feature type="chain" id="PRO_1000023035" description="UDP-N-acetylglucosamine 1-carboxyvinyltransferase">
    <location>
        <begin position="1"/>
        <end position="419"/>
    </location>
</feature>
<feature type="active site" description="Proton donor" evidence="1">
    <location>
        <position position="115"/>
    </location>
</feature>
<feature type="binding site" evidence="1">
    <location>
        <begin position="22"/>
        <end position="23"/>
    </location>
    <ligand>
        <name>phosphoenolpyruvate</name>
        <dbReference type="ChEBI" id="CHEBI:58702"/>
    </ligand>
</feature>
<feature type="binding site" evidence="1">
    <location>
        <position position="91"/>
    </location>
    <ligand>
        <name>UDP-N-acetyl-alpha-D-glucosamine</name>
        <dbReference type="ChEBI" id="CHEBI:57705"/>
    </ligand>
</feature>
<feature type="binding site" evidence="1">
    <location>
        <begin position="120"/>
        <end position="124"/>
    </location>
    <ligand>
        <name>UDP-N-acetyl-alpha-D-glucosamine</name>
        <dbReference type="ChEBI" id="CHEBI:57705"/>
    </ligand>
</feature>
<feature type="binding site" evidence="1">
    <location>
        <begin position="160"/>
        <end position="163"/>
    </location>
    <ligand>
        <name>UDP-N-acetyl-alpha-D-glucosamine</name>
        <dbReference type="ChEBI" id="CHEBI:57705"/>
    </ligand>
</feature>
<feature type="binding site" evidence="1">
    <location>
        <position position="305"/>
    </location>
    <ligand>
        <name>UDP-N-acetyl-alpha-D-glucosamine</name>
        <dbReference type="ChEBI" id="CHEBI:57705"/>
    </ligand>
</feature>
<feature type="binding site" evidence="1">
    <location>
        <position position="327"/>
    </location>
    <ligand>
        <name>UDP-N-acetyl-alpha-D-glucosamine</name>
        <dbReference type="ChEBI" id="CHEBI:57705"/>
    </ligand>
</feature>
<feature type="modified residue" description="2-(S-cysteinyl)pyruvic acid O-phosphothioketal" evidence="1">
    <location>
        <position position="115"/>
    </location>
</feature>
<reference key="1">
    <citation type="journal article" date="2006" name="Proc. Natl. Acad. Sci. U.S.A.">
        <title>Identification of genes subject to positive selection in uropathogenic strains of Escherichia coli: a comparative genomics approach.</title>
        <authorList>
            <person name="Chen S.L."/>
            <person name="Hung C.-S."/>
            <person name="Xu J."/>
            <person name="Reigstad C.S."/>
            <person name="Magrini V."/>
            <person name="Sabo A."/>
            <person name="Blasiar D."/>
            <person name="Bieri T."/>
            <person name="Meyer R.R."/>
            <person name="Ozersky P."/>
            <person name="Armstrong J.R."/>
            <person name="Fulton R.S."/>
            <person name="Latreille J.P."/>
            <person name="Spieth J."/>
            <person name="Hooton T.M."/>
            <person name="Mardis E.R."/>
            <person name="Hultgren S.J."/>
            <person name="Gordon J.I."/>
        </authorList>
    </citation>
    <scope>NUCLEOTIDE SEQUENCE [LARGE SCALE GENOMIC DNA]</scope>
    <source>
        <strain>UTI89 / UPEC</strain>
    </source>
</reference>
<comment type="function">
    <text evidence="1">Cell wall formation. Adds enolpyruvyl to UDP-N-acetylglucosamine.</text>
</comment>
<comment type="catalytic activity">
    <reaction evidence="1">
        <text>phosphoenolpyruvate + UDP-N-acetyl-alpha-D-glucosamine = UDP-N-acetyl-3-O-(1-carboxyvinyl)-alpha-D-glucosamine + phosphate</text>
        <dbReference type="Rhea" id="RHEA:18681"/>
        <dbReference type="ChEBI" id="CHEBI:43474"/>
        <dbReference type="ChEBI" id="CHEBI:57705"/>
        <dbReference type="ChEBI" id="CHEBI:58702"/>
        <dbReference type="ChEBI" id="CHEBI:68483"/>
        <dbReference type="EC" id="2.5.1.7"/>
    </reaction>
</comment>
<comment type="pathway">
    <text evidence="1">Cell wall biogenesis; peptidoglycan biosynthesis.</text>
</comment>
<comment type="subcellular location">
    <subcellularLocation>
        <location evidence="1">Cytoplasm</location>
    </subcellularLocation>
</comment>
<comment type="similarity">
    <text evidence="1">Belongs to the EPSP synthase family. MurA subfamily.</text>
</comment>
<organism>
    <name type="scientific">Escherichia coli (strain UTI89 / UPEC)</name>
    <dbReference type="NCBI Taxonomy" id="364106"/>
    <lineage>
        <taxon>Bacteria</taxon>
        <taxon>Pseudomonadati</taxon>
        <taxon>Pseudomonadota</taxon>
        <taxon>Gammaproteobacteria</taxon>
        <taxon>Enterobacterales</taxon>
        <taxon>Enterobacteriaceae</taxon>
        <taxon>Escherichia</taxon>
    </lineage>
</organism>
<accession>Q1R6E7</accession>
<sequence>MDKFRVQGPTKLQGEVTISGAKNAALPILFAALLAEEPVEIQNVPKLKDVDTSMKLLSQLGAKVERNGSVHIDARDVNVFCAPYDLVKTMRASIWALGPLVARFGQGQVSLPGGCTIGARPVDLHISGLEQLGATIKLEEGYVKASVDGRLKGAHIVMDKVSVGATVTIMCAATLAEGTTIIENAAREPEIVDTANFLITLGAKISGQGTDRIVIEGVERLGGGVYRVLPDRIETGTFLVAAAISRGKIICRNAQPDTLDAVLAKLRDAGADIEVGEDWISLDMHGKRPKAVNVRTAPHPAFPTDMQAQFTLLNLVAEGTGFITETVFENRFMHVPELSRMGAHAEIESNTVICHGVEKLSGAQVMATDLRASASLVLAGCIAEGTTVVDRIYHIDRGYERIEDKLRALGANIERVKGE</sequence>
<gene>
    <name evidence="1" type="primary">murA</name>
    <name type="ordered locus">UTI89_C3623</name>
</gene>
<evidence type="ECO:0000255" key="1">
    <source>
        <dbReference type="HAMAP-Rule" id="MF_00111"/>
    </source>
</evidence>
<proteinExistence type="inferred from homology"/>
<name>MURA_ECOUT</name>
<dbReference type="EC" id="2.5.1.7" evidence="1"/>
<dbReference type="EMBL" id="CP000243">
    <property type="protein sequence ID" value="ABE09067.1"/>
    <property type="molecule type" value="Genomic_DNA"/>
</dbReference>
<dbReference type="RefSeq" id="WP_000357259.1">
    <property type="nucleotide sequence ID" value="NZ_CP064825.1"/>
</dbReference>
<dbReference type="SMR" id="Q1R6E7"/>
<dbReference type="GeneID" id="93778792"/>
<dbReference type="KEGG" id="eci:UTI89_C3623"/>
<dbReference type="HOGENOM" id="CLU_027387_0_0_6"/>
<dbReference type="UniPathway" id="UPA00219"/>
<dbReference type="Proteomes" id="UP000001952">
    <property type="component" value="Chromosome"/>
</dbReference>
<dbReference type="GO" id="GO:0005737">
    <property type="term" value="C:cytoplasm"/>
    <property type="evidence" value="ECO:0007669"/>
    <property type="project" value="UniProtKB-SubCell"/>
</dbReference>
<dbReference type="GO" id="GO:0008760">
    <property type="term" value="F:UDP-N-acetylglucosamine 1-carboxyvinyltransferase activity"/>
    <property type="evidence" value="ECO:0007669"/>
    <property type="project" value="UniProtKB-UniRule"/>
</dbReference>
<dbReference type="GO" id="GO:0051301">
    <property type="term" value="P:cell division"/>
    <property type="evidence" value="ECO:0007669"/>
    <property type="project" value="UniProtKB-KW"/>
</dbReference>
<dbReference type="GO" id="GO:0071555">
    <property type="term" value="P:cell wall organization"/>
    <property type="evidence" value="ECO:0007669"/>
    <property type="project" value="UniProtKB-KW"/>
</dbReference>
<dbReference type="GO" id="GO:0009252">
    <property type="term" value="P:peptidoglycan biosynthetic process"/>
    <property type="evidence" value="ECO:0007669"/>
    <property type="project" value="UniProtKB-UniRule"/>
</dbReference>
<dbReference type="GO" id="GO:0008360">
    <property type="term" value="P:regulation of cell shape"/>
    <property type="evidence" value="ECO:0007669"/>
    <property type="project" value="UniProtKB-KW"/>
</dbReference>
<dbReference type="GO" id="GO:0019277">
    <property type="term" value="P:UDP-N-acetylgalactosamine biosynthetic process"/>
    <property type="evidence" value="ECO:0007669"/>
    <property type="project" value="InterPro"/>
</dbReference>
<dbReference type="CDD" id="cd01555">
    <property type="entry name" value="UdpNAET"/>
    <property type="match status" value="1"/>
</dbReference>
<dbReference type="FunFam" id="3.65.10.10:FF:000002">
    <property type="entry name" value="UDP-N-acetylglucosamine 1-carboxyvinyltransferase"/>
    <property type="match status" value="1"/>
</dbReference>
<dbReference type="Gene3D" id="3.65.10.10">
    <property type="entry name" value="Enolpyruvate transferase domain"/>
    <property type="match status" value="2"/>
</dbReference>
<dbReference type="HAMAP" id="MF_00111">
    <property type="entry name" value="MurA"/>
    <property type="match status" value="1"/>
</dbReference>
<dbReference type="InterPro" id="IPR001986">
    <property type="entry name" value="Enolpyruvate_Tfrase_dom"/>
</dbReference>
<dbReference type="InterPro" id="IPR036968">
    <property type="entry name" value="Enolpyruvate_Tfrase_sf"/>
</dbReference>
<dbReference type="InterPro" id="IPR050068">
    <property type="entry name" value="MurA_subfamily"/>
</dbReference>
<dbReference type="InterPro" id="IPR013792">
    <property type="entry name" value="RNA3'P_cycl/enolpyr_Trfase_a/b"/>
</dbReference>
<dbReference type="InterPro" id="IPR005750">
    <property type="entry name" value="UDP_GlcNAc_COvinyl_MurA"/>
</dbReference>
<dbReference type="NCBIfam" id="TIGR01072">
    <property type="entry name" value="murA"/>
    <property type="match status" value="1"/>
</dbReference>
<dbReference type="NCBIfam" id="NF006873">
    <property type="entry name" value="PRK09369.1"/>
    <property type="match status" value="1"/>
</dbReference>
<dbReference type="PANTHER" id="PTHR43783">
    <property type="entry name" value="UDP-N-ACETYLGLUCOSAMINE 1-CARBOXYVINYLTRANSFERASE"/>
    <property type="match status" value="1"/>
</dbReference>
<dbReference type="PANTHER" id="PTHR43783:SF1">
    <property type="entry name" value="UDP-N-ACETYLGLUCOSAMINE 1-CARBOXYVINYLTRANSFERASE"/>
    <property type="match status" value="1"/>
</dbReference>
<dbReference type="Pfam" id="PF00275">
    <property type="entry name" value="EPSP_synthase"/>
    <property type="match status" value="1"/>
</dbReference>
<dbReference type="SUPFAM" id="SSF55205">
    <property type="entry name" value="EPT/RTPC-like"/>
    <property type="match status" value="1"/>
</dbReference>